<comment type="function">
    <text evidence="1">Could be a nuclease involved in processing of the 5'-end of pre-16S rRNA.</text>
</comment>
<comment type="subcellular location">
    <subcellularLocation>
        <location evidence="1">Cytoplasm</location>
    </subcellularLocation>
</comment>
<comment type="similarity">
    <text evidence="1">Belongs to the YqgF nuclease family.</text>
</comment>
<proteinExistence type="inferred from homology"/>
<dbReference type="EC" id="3.1.-.-" evidence="1"/>
<dbReference type="EMBL" id="CP000962">
    <property type="protein sequence ID" value="ACA55896.1"/>
    <property type="molecule type" value="Genomic_DNA"/>
</dbReference>
<dbReference type="SMR" id="B1KXB5"/>
<dbReference type="KEGG" id="cbl:CLK_1947"/>
<dbReference type="HOGENOM" id="CLU_098240_2_0_9"/>
<dbReference type="GO" id="GO:0005829">
    <property type="term" value="C:cytosol"/>
    <property type="evidence" value="ECO:0007669"/>
    <property type="project" value="TreeGrafter"/>
</dbReference>
<dbReference type="GO" id="GO:0004518">
    <property type="term" value="F:nuclease activity"/>
    <property type="evidence" value="ECO:0007669"/>
    <property type="project" value="UniProtKB-KW"/>
</dbReference>
<dbReference type="GO" id="GO:0000967">
    <property type="term" value="P:rRNA 5'-end processing"/>
    <property type="evidence" value="ECO:0007669"/>
    <property type="project" value="UniProtKB-UniRule"/>
</dbReference>
<dbReference type="CDD" id="cd16964">
    <property type="entry name" value="YqgF"/>
    <property type="match status" value="1"/>
</dbReference>
<dbReference type="FunFam" id="3.30.420.140:FF:000003">
    <property type="entry name" value="Putative pre-16S rRNA nuclease"/>
    <property type="match status" value="1"/>
</dbReference>
<dbReference type="Gene3D" id="3.30.420.140">
    <property type="entry name" value="YqgF/RNase H-like domain"/>
    <property type="match status" value="1"/>
</dbReference>
<dbReference type="HAMAP" id="MF_00651">
    <property type="entry name" value="Nuclease_YqgF"/>
    <property type="match status" value="1"/>
</dbReference>
<dbReference type="InterPro" id="IPR012337">
    <property type="entry name" value="RNaseH-like_sf"/>
</dbReference>
<dbReference type="InterPro" id="IPR005227">
    <property type="entry name" value="YqgF"/>
</dbReference>
<dbReference type="InterPro" id="IPR006641">
    <property type="entry name" value="YqgF/RNaseH-like_dom"/>
</dbReference>
<dbReference type="InterPro" id="IPR037027">
    <property type="entry name" value="YqgF/RNaseH-like_dom_sf"/>
</dbReference>
<dbReference type="NCBIfam" id="TIGR00250">
    <property type="entry name" value="RNAse_H_YqgF"/>
    <property type="match status" value="1"/>
</dbReference>
<dbReference type="PANTHER" id="PTHR33317">
    <property type="entry name" value="POLYNUCLEOTIDYL TRANSFERASE, RIBONUCLEASE H-LIKE SUPERFAMILY PROTEIN"/>
    <property type="match status" value="1"/>
</dbReference>
<dbReference type="PANTHER" id="PTHR33317:SF4">
    <property type="entry name" value="POLYNUCLEOTIDYL TRANSFERASE, RIBONUCLEASE H-LIKE SUPERFAMILY PROTEIN"/>
    <property type="match status" value="1"/>
</dbReference>
<dbReference type="Pfam" id="PF03652">
    <property type="entry name" value="RuvX"/>
    <property type="match status" value="1"/>
</dbReference>
<dbReference type="SMART" id="SM00732">
    <property type="entry name" value="YqgFc"/>
    <property type="match status" value="1"/>
</dbReference>
<dbReference type="SUPFAM" id="SSF53098">
    <property type="entry name" value="Ribonuclease H-like"/>
    <property type="match status" value="1"/>
</dbReference>
<organism>
    <name type="scientific">Clostridium botulinum (strain Loch Maree / Type A3)</name>
    <dbReference type="NCBI Taxonomy" id="498214"/>
    <lineage>
        <taxon>Bacteria</taxon>
        <taxon>Bacillati</taxon>
        <taxon>Bacillota</taxon>
        <taxon>Clostridia</taxon>
        <taxon>Eubacteriales</taxon>
        <taxon>Clostridiaceae</taxon>
        <taxon>Clostridium</taxon>
    </lineage>
</organism>
<protein>
    <recommendedName>
        <fullName evidence="1">Putative pre-16S rRNA nuclease</fullName>
        <ecNumber evidence="1">3.1.-.-</ecNumber>
    </recommendedName>
</protein>
<reference key="1">
    <citation type="journal article" date="2007" name="PLoS ONE">
        <title>Analysis of the neurotoxin complex genes in Clostridium botulinum A1-A4 and B1 strains: BoNT/A3, /Ba4 and /B1 clusters are located within plasmids.</title>
        <authorList>
            <person name="Smith T.J."/>
            <person name="Hill K.K."/>
            <person name="Foley B.T."/>
            <person name="Detter J.C."/>
            <person name="Munk A.C."/>
            <person name="Bruce D.C."/>
            <person name="Doggett N.A."/>
            <person name="Smith L.A."/>
            <person name="Marks J.D."/>
            <person name="Xie G."/>
            <person name="Brettin T.S."/>
        </authorList>
    </citation>
    <scope>NUCLEOTIDE SEQUENCE [LARGE SCALE GENOMIC DNA]</scope>
    <source>
        <strain>Loch Maree / Type A3</strain>
    </source>
</reference>
<keyword id="KW-0963">Cytoplasm</keyword>
<keyword id="KW-0378">Hydrolase</keyword>
<keyword id="KW-0540">Nuclease</keyword>
<keyword id="KW-0690">Ribosome biogenesis</keyword>
<accession>B1KXB5</accession>
<evidence type="ECO:0000255" key="1">
    <source>
        <dbReference type="HAMAP-Rule" id="MF_00651"/>
    </source>
</evidence>
<sequence length="137" mass="15361">MRILGLDIGDRTIGIAISDPLGFTAQGITTIRRKSEAYDLEEIKKICDKYEVDTIVSGLPKNMNGTLGPQSEKVLEFCDLIKEHLNIEIKMWDERLTTVAATRAMLEADLSRSKRKKIVDKVAATYILQGYLDSLSK</sequence>
<feature type="chain" id="PRO_1000131016" description="Putative pre-16S rRNA nuclease">
    <location>
        <begin position="1"/>
        <end position="137"/>
    </location>
</feature>
<name>YQGF_CLOBM</name>
<gene>
    <name type="ordered locus">CLK_1947</name>
</gene>